<feature type="transit peptide" description="Mitochondrion" evidence="2">
    <location>
        <begin position="1"/>
        <end position="35"/>
    </location>
</feature>
<feature type="chain" id="PRO_0000296325" description="Essential MCU regulator, mitochondrial">
    <location>
        <begin position="36"/>
        <end position="97"/>
    </location>
</feature>
<feature type="transmembrane region" description="Helical" evidence="2">
    <location>
        <begin position="53"/>
        <end position="73"/>
    </location>
</feature>
<organism>
    <name type="scientific">Drosophila melanogaster</name>
    <name type="common">Fruit fly</name>
    <dbReference type="NCBI Taxonomy" id="7227"/>
    <lineage>
        <taxon>Eukaryota</taxon>
        <taxon>Metazoa</taxon>
        <taxon>Ecdysozoa</taxon>
        <taxon>Arthropoda</taxon>
        <taxon>Hexapoda</taxon>
        <taxon>Insecta</taxon>
        <taxon>Pterygota</taxon>
        <taxon>Neoptera</taxon>
        <taxon>Endopterygota</taxon>
        <taxon>Diptera</taxon>
        <taxon>Brachycera</taxon>
        <taxon>Muscomorpha</taxon>
        <taxon>Ephydroidea</taxon>
        <taxon>Drosophilidae</taxon>
        <taxon>Drosophila</taxon>
        <taxon>Sophophora</taxon>
    </lineage>
</organism>
<name>EMRE_DROME</name>
<comment type="function">
    <text evidence="3 4">Essential regulatory subunit of the mitochondrial calcium uniporter MCU channel, a protein that mediates calcium uptake into mitochondria.</text>
</comment>
<comment type="subcellular location">
    <subcellularLocation>
        <location evidence="1">Mitochondrion inner membrane</location>
        <topology evidence="1">Single-pass membrane protein</topology>
    </subcellularLocation>
</comment>
<comment type="disruption phenotype">
    <text evidence="4">RNAi-mediated knockdown in muscle results in mitochondrial calcium uptake defects.</text>
</comment>
<comment type="similarity">
    <text evidence="6">Belongs to the SMDT1/EMRE family.</text>
</comment>
<keyword id="KW-0106">Calcium</keyword>
<keyword id="KW-0109">Calcium transport</keyword>
<keyword id="KW-0406">Ion transport</keyword>
<keyword id="KW-0472">Membrane</keyword>
<keyword id="KW-0496">Mitochondrion</keyword>
<keyword id="KW-0999">Mitochondrion inner membrane</keyword>
<keyword id="KW-1185">Reference proteome</keyword>
<keyword id="KW-0809">Transit peptide</keyword>
<keyword id="KW-0812">Transmembrane</keyword>
<keyword id="KW-1133">Transmembrane helix</keyword>
<keyword id="KW-0813">Transport</keyword>
<dbReference type="EMBL" id="AE013599">
    <property type="protein sequence ID" value="AAF57742.1"/>
    <property type="molecule type" value="Genomic_DNA"/>
</dbReference>
<dbReference type="EMBL" id="AY095085">
    <property type="protein sequence ID" value="AAM11413.1"/>
    <property type="molecule type" value="mRNA"/>
</dbReference>
<dbReference type="RefSeq" id="NP_611294.1">
    <property type="nucleotide sequence ID" value="NM_137450.2"/>
</dbReference>
<dbReference type="SMR" id="Q7JX57"/>
<dbReference type="ComplexPortal" id="CPX-2333">
    <property type="entry name" value="Mitochondrial calcium uniporter complex"/>
</dbReference>
<dbReference type="FunCoup" id="Q7JX57">
    <property type="interactions" value="194"/>
</dbReference>
<dbReference type="STRING" id="7227.FBpp0085960"/>
<dbReference type="TCDB" id="8.A.45.1.2">
    <property type="family name" value="the essential mcu regulator emre (emre) family"/>
</dbReference>
<dbReference type="PaxDb" id="7227-FBpp0085960"/>
<dbReference type="DNASU" id="37071"/>
<dbReference type="EnsemblMetazoa" id="FBtr0086781">
    <property type="protein sequence ID" value="FBpp0085960"/>
    <property type="gene ID" value="FBgn0062440"/>
</dbReference>
<dbReference type="GeneID" id="37071"/>
<dbReference type="KEGG" id="dme:Dmel_CG17680"/>
<dbReference type="UCSC" id="CG17680-RA">
    <property type="organism name" value="d. melanogaster"/>
</dbReference>
<dbReference type="AGR" id="FB:FBgn0062440"/>
<dbReference type="CTD" id="37071"/>
<dbReference type="FlyBase" id="FBgn0062440">
    <property type="gene designation" value="EMRE"/>
</dbReference>
<dbReference type="VEuPathDB" id="VectorBase:FBgn0062440"/>
<dbReference type="eggNOG" id="KOG4542">
    <property type="taxonomic scope" value="Eukaryota"/>
</dbReference>
<dbReference type="GeneTree" id="ENSGT00390000017489"/>
<dbReference type="HOGENOM" id="CLU_172921_0_0_1"/>
<dbReference type="InParanoid" id="Q7JX57"/>
<dbReference type="OMA" id="FAQQTAC"/>
<dbReference type="OrthoDB" id="10039145at2759"/>
<dbReference type="PhylomeDB" id="Q7JX57"/>
<dbReference type="Reactome" id="R-DME-8949215">
    <property type="pathway name" value="Mitochondrial calcium ion transport"/>
</dbReference>
<dbReference type="Reactome" id="R-DME-8949664">
    <property type="pathway name" value="Processing of SMDT1"/>
</dbReference>
<dbReference type="Reactome" id="R-DME-9837999">
    <property type="pathway name" value="Mitochondrial protein degradation"/>
</dbReference>
<dbReference type="BioGRID-ORCS" id="37071">
    <property type="hits" value="0 hits in 1 CRISPR screen"/>
</dbReference>
<dbReference type="GenomeRNAi" id="37071"/>
<dbReference type="PRO" id="PR:Q7JX57"/>
<dbReference type="Proteomes" id="UP000000803">
    <property type="component" value="Chromosome 2R"/>
</dbReference>
<dbReference type="Bgee" id="FBgn0062440">
    <property type="expression patterns" value="Expressed in dorsal cluster neuron (Drosophila) in brain and 139 other cell types or tissues"/>
</dbReference>
<dbReference type="ExpressionAtlas" id="Q7JX57">
    <property type="expression patterns" value="baseline and differential"/>
</dbReference>
<dbReference type="GO" id="GO:1990246">
    <property type="term" value="C:uniplex complex"/>
    <property type="evidence" value="ECO:0000250"/>
    <property type="project" value="FlyBase"/>
</dbReference>
<dbReference type="GO" id="GO:0005262">
    <property type="term" value="F:calcium channel activity"/>
    <property type="evidence" value="ECO:0000315"/>
    <property type="project" value="FlyBase"/>
</dbReference>
<dbReference type="GO" id="GO:0036444">
    <property type="term" value="P:calcium import into the mitochondrion"/>
    <property type="evidence" value="ECO:0000315"/>
    <property type="project" value="FlyBase"/>
</dbReference>
<dbReference type="GO" id="GO:0050829">
    <property type="term" value="P:defense response to Gram-negative bacterium"/>
    <property type="evidence" value="ECO:0007001"/>
    <property type="project" value="FlyBase"/>
</dbReference>
<dbReference type="GO" id="GO:0051560">
    <property type="term" value="P:mitochondrial calcium ion homeostasis"/>
    <property type="evidence" value="ECO:0000315"/>
    <property type="project" value="UniProtKB"/>
</dbReference>
<dbReference type="GO" id="GO:0006851">
    <property type="term" value="P:mitochondrial calcium ion transmembrane transport"/>
    <property type="evidence" value="ECO:0000315"/>
    <property type="project" value="UniProtKB"/>
</dbReference>
<dbReference type="GO" id="GO:0045089">
    <property type="term" value="P:positive regulation of innate immune response"/>
    <property type="evidence" value="ECO:0007001"/>
    <property type="project" value="FlyBase"/>
</dbReference>
<dbReference type="InterPro" id="IPR018782">
    <property type="entry name" value="MCU_reg"/>
</dbReference>
<dbReference type="PANTHER" id="PTHR33904">
    <property type="entry name" value="ESSENTIAL MCU REGULATOR, MITOCHONDRIAL"/>
    <property type="match status" value="1"/>
</dbReference>
<dbReference type="PANTHER" id="PTHR33904:SF1">
    <property type="entry name" value="ESSENTIAL MCU REGULATOR, MITOCHONDRIAL"/>
    <property type="match status" value="1"/>
</dbReference>
<dbReference type="Pfam" id="PF10161">
    <property type="entry name" value="DDDD"/>
    <property type="match status" value="1"/>
</dbReference>
<protein>
    <recommendedName>
        <fullName evidence="1">Essential MCU regulator, mitochondrial</fullName>
    </recommendedName>
</protein>
<evidence type="ECO:0000250" key="1">
    <source>
        <dbReference type="UniProtKB" id="Q9H4I9"/>
    </source>
</evidence>
<evidence type="ECO:0000255" key="2"/>
<evidence type="ECO:0000269" key="3">
    <source>
    </source>
</evidence>
<evidence type="ECO:0000269" key="4">
    <source>
    </source>
</evidence>
<evidence type="ECO:0000303" key="5">
    <source>
    </source>
</evidence>
<evidence type="ECO:0000305" key="6"/>
<evidence type="ECO:0000312" key="7">
    <source>
        <dbReference type="FlyBase" id="FBgn0062440"/>
    </source>
</evidence>
<sequence>MIVPRLALPISLALQRVSRRVAEHPHNLRILQRHMSSVYFRSGAIKPKPEEMPFGLLAIFCAVIPGLFVGATISKNVANFLEENDLFVPADDDDDED</sequence>
<gene>
    <name evidence="5 7" type="primary">EMRE</name>
    <name evidence="7" type="ORF">CG17680</name>
</gene>
<reference key="1">
    <citation type="journal article" date="2000" name="Science">
        <title>The genome sequence of Drosophila melanogaster.</title>
        <authorList>
            <person name="Adams M.D."/>
            <person name="Celniker S.E."/>
            <person name="Holt R.A."/>
            <person name="Evans C.A."/>
            <person name="Gocayne J.D."/>
            <person name="Amanatides P.G."/>
            <person name="Scherer S.E."/>
            <person name="Li P.W."/>
            <person name="Hoskins R.A."/>
            <person name="Galle R.F."/>
            <person name="George R.A."/>
            <person name="Lewis S.E."/>
            <person name="Richards S."/>
            <person name="Ashburner M."/>
            <person name="Henderson S.N."/>
            <person name="Sutton G.G."/>
            <person name="Wortman J.R."/>
            <person name="Yandell M.D."/>
            <person name="Zhang Q."/>
            <person name="Chen L.X."/>
            <person name="Brandon R.C."/>
            <person name="Rogers Y.-H.C."/>
            <person name="Blazej R.G."/>
            <person name="Champe M."/>
            <person name="Pfeiffer B.D."/>
            <person name="Wan K.H."/>
            <person name="Doyle C."/>
            <person name="Baxter E.G."/>
            <person name="Helt G."/>
            <person name="Nelson C.R."/>
            <person name="Miklos G.L.G."/>
            <person name="Abril J.F."/>
            <person name="Agbayani A."/>
            <person name="An H.-J."/>
            <person name="Andrews-Pfannkoch C."/>
            <person name="Baldwin D."/>
            <person name="Ballew R.M."/>
            <person name="Basu A."/>
            <person name="Baxendale J."/>
            <person name="Bayraktaroglu L."/>
            <person name="Beasley E.M."/>
            <person name="Beeson K.Y."/>
            <person name="Benos P.V."/>
            <person name="Berman B.P."/>
            <person name="Bhandari D."/>
            <person name="Bolshakov S."/>
            <person name="Borkova D."/>
            <person name="Botchan M.R."/>
            <person name="Bouck J."/>
            <person name="Brokstein P."/>
            <person name="Brottier P."/>
            <person name="Burtis K.C."/>
            <person name="Busam D.A."/>
            <person name="Butler H."/>
            <person name="Cadieu E."/>
            <person name="Center A."/>
            <person name="Chandra I."/>
            <person name="Cherry J.M."/>
            <person name="Cawley S."/>
            <person name="Dahlke C."/>
            <person name="Davenport L.B."/>
            <person name="Davies P."/>
            <person name="de Pablos B."/>
            <person name="Delcher A."/>
            <person name="Deng Z."/>
            <person name="Mays A.D."/>
            <person name="Dew I."/>
            <person name="Dietz S.M."/>
            <person name="Dodson K."/>
            <person name="Doup L.E."/>
            <person name="Downes M."/>
            <person name="Dugan-Rocha S."/>
            <person name="Dunkov B.C."/>
            <person name="Dunn P."/>
            <person name="Durbin K.J."/>
            <person name="Evangelista C.C."/>
            <person name="Ferraz C."/>
            <person name="Ferriera S."/>
            <person name="Fleischmann W."/>
            <person name="Fosler C."/>
            <person name="Gabrielian A.E."/>
            <person name="Garg N.S."/>
            <person name="Gelbart W.M."/>
            <person name="Glasser K."/>
            <person name="Glodek A."/>
            <person name="Gong F."/>
            <person name="Gorrell J.H."/>
            <person name="Gu Z."/>
            <person name="Guan P."/>
            <person name="Harris M."/>
            <person name="Harris N.L."/>
            <person name="Harvey D.A."/>
            <person name="Heiman T.J."/>
            <person name="Hernandez J.R."/>
            <person name="Houck J."/>
            <person name="Hostin D."/>
            <person name="Houston K.A."/>
            <person name="Howland T.J."/>
            <person name="Wei M.-H."/>
            <person name="Ibegwam C."/>
            <person name="Jalali M."/>
            <person name="Kalush F."/>
            <person name="Karpen G.H."/>
            <person name="Ke Z."/>
            <person name="Kennison J.A."/>
            <person name="Ketchum K.A."/>
            <person name="Kimmel B.E."/>
            <person name="Kodira C.D."/>
            <person name="Kraft C.L."/>
            <person name="Kravitz S."/>
            <person name="Kulp D."/>
            <person name="Lai Z."/>
            <person name="Lasko P."/>
            <person name="Lei Y."/>
            <person name="Levitsky A.A."/>
            <person name="Li J.H."/>
            <person name="Li Z."/>
            <person name="Liang Y."/>
            <person name="Lin X."/>
            <person name="Liu X."/>
            <person name="Mattei B."/>
            <person name="McIntosh T.C."/>
            <person name="McLeod M.P."/>
            <person name="McPherson D."/>
            <person name="Merkulov G."/>
            <person name="Milshina N.V."/>
            <person name="Mobarry C."/>
            <person name="Morris J."/>
            <person name="Moshrefi A."/>
            <person name="Mount S.M."/>
            <person name="Moy M."/>
            <person name="Murphy B."/>
            <person name="Murphy L."/>
            <person name="Muzny D.M."/>
            <person name="Nelson D.L."/>
            <person name="Nelson D.R."/>
            <person name="Nelson K.A."/>
            <person name="Nixon K."/>
            <person name="Nusskern D.R."/>
            <person name="Pacleb J.M."/>
            <person name="Palazzolo M."/>
            <person name="Pittman G.S."/>
            <person name="Pan S."/>
            <person name="Pollard J."/>
            <person name="Puri V."/>
            <person name="Reese M.G."/>
            <person name="Reinert K."/>
            <person name="Remington K."/>
            <person name="Saunders R.D.C."/>
            <person name="Scheeler F."/>
            <person name="Shen H."/>
            <person name="Shue B.C."/>
            <person name="Siden-Kiamos I."/>
            <person name="Simpson M."/>
            <person name="Skupski M.P."/>
            <person name="Smith T.J."/>
            <person name="Spier E."/>
            <person name="Spradling A.C."/>
            <person name="Stapleton M."/>
            <person name="Strong R."/>
            <person name="Sun E."/>
            <person name="Svirskas R."/>
            <person name="Tector C."/>
            <person name="Turner R."/>
            <person name="Venter E."/>
            <person name="Wang A.H."/>
            <person name="Wang X."/>
            <person name="Wang Z.-Y."/>
            <person name="Wassarman D.A."/>
            <person name="Weinstock G.M."/>
            <person name="Weissenbach J."/>
            <person name="Williams S.M."/>
            <person name="Woodage T."/>
            <person name="Worley K.C."/>
            <person name="Wu D."/>
            <person name="Yang S."/>
            <person name="Yao Q.A."/>
            <person name="Ye J."/>
            <person name="Yeh R.-F."/>
            <person name="Zaveri J.S."/>
            <person name="Zhan M."/>
            <person name="Zhang G."/>
            <person name="Zhao Q."/>
            <person name="Zheng L."/>
            <person name="Zheng X.H."/>
            <person name="Zhong F.N."/>
            <person name="Zhong W."/>
            <person name="Zhou X."/>
            <person name="Zhu S.C."/>
            <person name="Zhu X."/>
            <person name="Smith H.O."/>
            <person name="Gibbs R.A."/>
            <person name="Myers E.W."/>
            <person name="Rubin G.M."/>
            <person name="Venter J.C."/>
        </authorList>
    </citation>
    <scope>NUCLEOTIDE SEQUENCE [LARGE SCALE GENOMIC DNA]</scope>
    <source>
        <strain>Berkeley</strain>
    </source>
</reference>
<reference key="2">
    <citation type="journal article" date="2002" name="Genome Biol.">
        <title>Annotation of the Drosophila melanogaster euchromatic genome: a systematic review.</title>
        <authorList>
            <person name="Misra S."/>
            <person name="Crosby M.A."/>
            <person name="Mungall C.J."/>
            <person name="Matthews B.B."/>
            <person name="Campbell K.S."/>
            <person name="Hradecky P."/>
            <person name="Huang Y."/>
            <person name="Kaminker J.S."/>
            <person name="Millburn G.H."/>
            <person name="Prochnik S.E."/>
            <person name="Smith C.D."/>
            <person name="Tupy J.L."/>
            <person name="Whitfield E.J."/>
            <person name="Bayraktaroglu L."/>
            <person name="Berman B.P."/>
            <person name="Bettencourt B.R."/>
            <person name="Celniker S.E."/>
            <person name="de Grey A.D.N.J."/>
            <person name="Drysdale R.A."/>
            <person name="Harris N.L."/>
            <person name="Richter J."/>
            <person name="Russo S."/>
            <person name="Schroeder A.J."/>
            <person name="Shu S.Q."/>
            <person name="Stapleton M."/>
            <person name="Yamada C."/>
            <person name="Ashburner M."/>
            <person name="Gelbart W.M."/>
            <person name="Rubin G.M."/>
            <person name="Lewis S.E."/>
        </authorList>
    </citation>
    <scope>GENOME REANNOTATION</scope>
    <source>
        <strain>Berkeley</strain>
    </source>
</reference>
<reference key="3">
    <citation type="journal article" date="2002" name="Genome Biol.">
        <title>A Drosophila full-length cDNA resource.</title>
        <authorList>
            <person name="Stapleton M."/>
            <person name="Carlson J.W."/>
            <person name="Brokstein P."/>
            <person name="Yu C."/>
            <person name="Champe M."/>
            <person name="George R.A."/>
            <person name="Guarin H."/>
            <person name="Kronmiller B."/>
            <person name="Pacleb J.M."/>
            <person name="Park S."/>
            <person name="Wan K.H."/>
            <person name="Rubin G.M."/>
            <person name="Celniker S.E."/>
        </authorList>
    </citation>
    <scope>NUCLEOTIDE SEQUENCE [LARGE SCALE MRNA]</scope>
    <source>
        <strain>Berkeley</strain>
        <tissue>Embryo</tissue>
    </source>
</reference>
<reference key="4">
    <citation type="journal article" date="2016" name="Elife">
        <title>Dual functions of a small regulatory subunit in the mitochondrial calcium uniporter complex.</title>
        <authorList>
            <person name="Tsai M.F."/>
            <person name="Phillips C.B."/>
            <person name="Ranaghan M."/>
            <person name="Tsai C.W."/>
            <person name="Wu Y."/>
            <person name="Willliams C."/>
            <person name="Miller C."/>
        </authorList>
    </citation>
    <scope>FUNCTION</scope>
</reference>
<reference key="5">
    <citation type="journal article" date="2017" name="J. Biol. Chem.">
        <title>Mitochondrial calcium uniporter in Drosophila transfers calcium between the endoplasmic reticulum and mitochondria in oxidative stress-induced cell death.</title>
        <authorList>
            <person name="Choi S."/>
            <person name="Quan X."/>
            <person name="Bang S."/>
            <person name="Yoo H."/>
            <person name="Kim J."/>
            <person name="Park J."/>
            <person name="Park K.S."/>
            <person name="Chung J."/>
        </authorList>
    </citation>
    <scope>FUNCTION</scope>
    <scope>DISRUPTION PHENOTYPE</scope>
</reference>
<proteinExistence type="inferred from homology"/>
<accession>Q7JX57</accession>